<dbReference type="EC" id="6.3.2.13" evidence="1"/>
<dbReference type="EMBL" id="CP000348">
    <property type="protein sequence ID" value="ABJ79960.1"/>
    <property type="molecule type" value="Genomic_DNA"/>
</dbReference>
<dbReference type="RefSeq" id="WP_011670911.1">
    <property type="nucleotide sequence ID" value="NC_008508.1"/>
</dbReference>
<dbReference type="SMR" id="Q04Y85"/>
<dbReference type="KEGG" id="lbl:LBL_2600"/>
<dbReference type="HOGENOM" id="CLU_022291_2_1_12"/>
<dbReference type="UniPathway" id="UPA00219"/>
<dbReference type="GO" id="GO:0005737">
    <property type="term" value="C:cytoplasm"/>
    <property type="evidence" value="ECO:0007669"/>
    <property type="project" value="UniProtKB-SubCell"/>
</dbReference>
<dbReference type="GO" id="GO:0005524">
    <property type="term" value="F:ATP binding"/>
    <property type="evidence" value="ECO:0007669"/>
    <property type="project" value="UniProtKB-UniRule"/>
</dbReference>
<dbReference type="GO" id="GO:0000287">
    <property type="term" value="F:magnesium ion binding"/>
    <property type="evidence" value="ECO:0007669"/>
    <property type="project" value="UniProtKB-UniRule"/>
</dbReference>
<dbReference type="GO" id="GO:0008765">
    <property type="term" value="F:UDP-N-acetylmuramoylalanyl-D-glutamate-2,6-diaminopimelate ligase activity"/>
    <property type="evidence" value="ECO:0007669"/>
    <property type="project" value="UniProtKB-UniRule"/>
</dbReference>
<dbReference type="GO" id="GO:0051301">
    <property type="term" value="P:cell division"/>
    <property type="evidence" value="ECO:0007669"/>
    <property type="project" value="UniProtKB-KW"/>
</dbReference>
<dbReference type="GO" id="GO:0071555">
    <property type="term" value="P:cell wall organization"/>
    <property type="evidence" value="ECO:0007669"/>
    <property type="project" value="UniProtKB-KW"/>
</dbReference>
<dbReference type="GO" id="GO:0009252">
    <property type="term" value="P:peptidoglycan biosynthetic process"/>
    <property type="evidence" value="ECO:0007669"/>
    <property type="project" value="UniProtKB-UniRule"/>
</dbReference>
<dbReference type="GO" id="GO:0008360">
    <property type="term" value="P:regulation of cell shape"/>
    <property type="evidence" value="ECO:0007669"/>
    <property type="project" value="UniProtKB-KW"/>
</dbReference>
<dbReference type="Gene3D" id="3.90.190.20">
    <property type="entry name" value="Mur ligase, C-terminal domain"/>
    <property type="match status" value="1"/>
</dbReference>
<dbReference type="Gene3D" id="3.40.1190.10">
    <property type="entry name" value="Mur-like, catalytic domain"/>
    <property type="match status" value="1"/>
</dbReference>
<dbReference type="HAMAP" id="MF_00208">
    <property type="entry name" value="MurE"/>
    <property type="match status" value="1"/>
</dbReference>
<dbReference type="InterPro" id="IPR036565">
    <property type="entry name" value="Mur-like_cat_sf"/>
</dbReference>
<dbReference type="InterPro" id="IPR004101">
    <property type="entry name" value="Mur_ligase_C"/>
</dbReference>
<dbReference type="InterPro" id="IPR036615">
    <property type="entry name" value="Mur_ligase_C_dom_sf"/>
</dbReference>
<dbReference type="InterPro" id="IPR013221">
    <property type="entry name" value="Mur_ligase_cen"/>
</dbReference>
<dbReference type="InterPro" id="IPR005761">
    <property type="entry name" value="UDP-N-AcMur-Glu-dNH2Pim_ligase"/>
</dbReference>
<dbReference type="NCBIfam" id="TIGR01085">
    <property type="entry name" value="murE"/>
    <property type="match status" value="1"/>
</dbReference>
<dbReference type="NCBIfam" id="NF001126">
    <property type="entry name" value="PRK00139.1-4"/>
    <property type="match status" value="1"/>
</dbReference>
<dbReference type="PANTHER" id="PTHR23135">
    <property type="entry name" value="MUR LIGASE FAMILY MEMBER"/>
    <property type="match status" value="1"/>
</dbReference>
<dbReference type="PANTHER" id="PTHR23135:SF4">
    <property type="entry name" value="UDP-N-ACETYLMURAMOYL-L-ALANYL-D-GLUTAMATE--2,6-DIAMINOPIMELATE LIGASE MURE HOMOLOG, CHLOROPLASTIC"/>
    <property type="match status" value="1"/>
</dbReference>
<dbReference type="Pfam" id="PF02875">
    <property type="entry name" value="Mur_ligase_C"/>
    <property type="match status" value="1"/>
</dbReference>
<dbReference type="Pfam" id="PF08245">
    <property type="entry name" value="Mur_ligase_M"/>
    <property type="match status" value="1"/>
</dbReference>
<dbReference type="SUPFAM" id="SSF53623">
    <property type="entry name" value="MurD-like peptide ligases, catalytic domain"/>
    <property type="match status" value="1"/>
</dbReference>
<dbReference type="SUPFAM" id="SSF53244">
    <property type="entry name" value="MurD-like peptide ligases, peptide-binding domain"/>
    <property type="match status" value="1"/>
</dbReference>
<evidence type="ECO:0000255" key="1">
    <source>
        <dbReference type="HAMAP-Rule" id="MF_00208"/>
    </source>
</evidence>
<keyword id="KW-0067">ATP-binding</keyword>
<keyword id="KW-0131">Cell cycle</keyword>
<keyword id="KW-0132">Cell division</keyword>
<keyword id="KW-0133">Cell shape</keyword>
<keyword id="KW-0961">Cell wall biogenesis/degradation</keyword>
<keyword id="KW-0963">Cytoplasm</keyword>
<keyword id="KW-0436">Ligase</keyword>
<keyword id="KW-0460">Magnesium</keyword>
<keyword id="KW-0547">Nucleotide-binding</keyword>
<keyword id="KW-0573">Peptidoglycan synthesis</keyword>
<accession>Q04Y85</accession>
<gene>
    <name evidence="1" type="primary">murE</name>
    <name type="ordered locus">LBL_2600</name>
</gene>
<sequence>MKMKLTNLLHEFPELKLGSLPSGKNPDSVPIEYIQSDSRKTNPEDIFCVPESIGTKKGEFISNTKASVILLHRSSNISIDSSKIVLECEEDPEQLQGRIASFLLGHPSKTLEIVAVTGTNGKTSLTNILFALAKDQGKICGLIGTIGVKFGDRSIDTGYTTPDASSLNLILKQMKDEGVTTVFMEASSHGLKLGRIGGISLKAGVFTNLTQDHLDFHSDMEDYFESKFRLFEILDVSKSPFAVLDYSSPGGNELHRKIRNNLPDLPIKALDGIGGEYKVSNPFLTLQGTSYVLSLPGNRSQTISTNLLGSFNVRNTALAFLTGLGLGLDPKGMFSSLKEIPQIPGRFQIVYSKDRSRMAVVDYAHTPDALENIIRSVRNSRPKRLITLFGCGGDRDKTKRPKMARIAEELSDQVILTSDNPRSEKPEAILDEIQSGFSPGFTPLLREVDRARAISEGVGILPEGGCLLVAGKGHEEYQIIGKEKRHFSDVEEVRKAFGLF</sequence>
<feature type="chain" id="PRO_1000012371" description="UDP-N-acetylmuramoyl-L-alanyl-D-glutamate--2,6-diaminopimelate ligase">
    <location>
        <begin position="1"/>
        <end position="500"/>
    </location>
</feature>
<feature type="short sequence motif" description="Meso-diaminopimelate recognition motif">
    <location>
        <begin position="419"/>
        <end position="422"/>
    </location>
</feature>
<feature type="binding site" evidence="1">
    <location>
        <position position="38"/>
    </location>
    <ligand>
        <name>UDP-N-acetyl-alpha-D-muramoyl-L-alanyl-D-glutamate</name>
        <dbReference type="ChEBI" id="CHEBI:83900"/>
    </ligand>
</feature>
<feature type="binding site" evidence="1">
    <location>
        <begin position="118"/>
        <end position="124"/>
    </location>
    <ligand>
        <name>ATP</name>
        <dbReference type="ChEBI" id="CHEBI:30616"/>
    </ligand>
</feature>
<feature type="binding site" evidence="1">
    <location>
        <begin position="160"/>
        <end position="161"/>
    </location>
    <ligand>
        <name>UDP-N-acetyl-alpha-D-muramoyl-L-alanyl-D-glutamate</name>
        <dbReference type="ChEBI" id="CHEBI:83900"/>
    </ligand>
</feature>
<feature type="binding site" evidence="1">
    <location>
        <position position="187"/>
    </location>
    <ligand>
        <name>UDP-N-acetyl-alpha-D-muramoyl-L-alanyl-D-glutamate</name>
        <dbReference type="ChEBI" id="CHEBI:83900"/>
    </ligand>
</feature>
<feature type="binding site" evidence="1">
    <location>
        <position position="195"/>
    </location>
    <ligand>
        <name>UDP-N-acetyl-alpha-D-muramoyl-L-alanyl-D-glutamate</name>
        <dbReference type="ChEBI" id="CHEBI:83900"/>
    </ligand>
</feature>
<feature type="binding site" evidence="1">
    <location>
        <position position="395"/>
    </location>
    <ligand>
        <name>meso-2,6-diaminopimelate</name>
        <dbReference type="ChEBI" id="CHEBI:57791"/>
    </ligand>
</feature>
<feature type="binding site" evidence="1">
    <location>
        <begin position="419"/>
        <end position="422"/>
    </location>
    <ligand>
        <name>meso-2,6-diaminopimelate</name>
        <dbReference type="ChEBI" id="CHEBI:57791"/>
    </ligand>
</feature>
<feature type="binding site" evidence="1">
    <location>
        <position position="471"/>
    </location>
    <ligand>
        <name>meso-2,6-diaminopimelate</name>
        <dbReference type="ChEBI" id="CHEBI:57791"/>
    </ligand>
</feature>
<feature type="binding site" evidence="1">
    <location>
        <position position="475"/>
    </location>
    <ligand>
        <name>meso-2,6-diaminopimelate</name>
        <dbReference type="ChEBI" id="CHEBI:57791"/>
    </ligand>
</feature>
<feature type="modified residue" description="N6-carboxylysine" evidence="1">
    <location>
        <position position="227"/>
    </location>
</feature>
<protein>
    <recommendedName>
        <fullName evidence="1">UDP-N-acetylmuramoyl-L-alanyl-D-glutamate--2,6-diaminopimelate ligase</fullName>
        <ecNumber evidence="1">6.3.2.13</ecNumber>
    </recommendedName>
    <alternativeName>
        <fullName evidence="1">Meso-A2pm-adding enzyme</fullName>
    </alternativeName>
    <alternativeName>
        <fullName evidence="1">Meso-diaminopimelate-adding enzyme</fullName>
    </alternativeName>
    <alternativeName>
        <fullName evidence="1">UDP-MurNAc-L-Ala-D-Glu:meso-diaminopimelate ligase</fullName>
    </alternativeName>
    <alternativeName>
        <fullName evidence="1">UDP-MurNAc-tripeptide synthetase</fullName>
    </alternativeName>
    <alternativeName>
        <fullName evidence="1">UDP-N-acetylmuramyl-tripeptide synthetase</fullName>
    </alternativeName>
</protein>
<comment type="function">
    <text evidence="1">Catalyzes the addition of meso-diaminopimelic acid to the nucleotide precursor UDP-N-acetylmuramoyl-L-alanyl-D-glutamate (UMAG) in the biosynthesis of bacterial cell-wall peptidoglycan.</text>
</comment>
<comment type="catalytic activity">
    <reaction evidence="1">
        <text>UDP-N-acetyl-alpha-D-muramoyl-L-alanyl-D-glutamate + meso-2,6-diaminopimelate + ATP = UDP-N-acetyl-alpha-D-muramoyl-L-alanyl-gamma-D-glutamyl-meso-2,6-diaminopimelate + ADP + phosphate + H(+)</text>
        <dbReference type="Rhea" id="RHEA:23676"/>
        <dbReference type="ChEBI" id="CHEBI:15378"/>
        <dbReference type="ChEBI" id="CHEBI:30616"/>
        <dbReference type="ChEBI" id="CHEBI:43474"/>
        <dbReference type="ChEBI" id="CHEBI:57791"/>
        <dbReference type="ChEBI" id="CHEBI:83900"/>
        <dbReference type="ChEBI" id="CHEBI:83905"/>
        <dbReference type="ChEBI" id="CHEBI:456216"/>
        <dbReference type="EC" id="6.3.2.13"/>
    </reaction>
</comment>
<comment type="cofactor">
    <cofactor evidence="1">
        <name>Mg(2+)</name>
        <dbReference type="ChEBI" id="CHEBI:18420"/>
    </cofactor>
</comment>
<comment type="pathway">
    <text evidence="1">Cell wall biogenesis; peptidoglycan biosynthesis.</text>
</comment>
<comment type="subcellular location">
    <subcellularLocation>
        <location evidence="1">Cytoplasm</location>
    </subcellularLocation>
</comment>
<comment type="PTM">
    <text evidence="1">Carboxylation is probably crucial for Mg(2+) binding and, consequently, for the gamma-phosphate positioning of ATP.</text>
</comment>
<comment type="similarity">
    <text evidence="1">Belongs to the MurCDEF family. MurE subfamily.</text>
</comment>
<proteinExistence type="inferred from homology"/>
<reference key="1">
    <citation type="journal article" date="2006" name="Proc. Natl. Acad. Sci. U.S.A.">
        <title>Genome reduction in Leptospira borgpetersenii reflects limited transmission potential.</title>
        <authorList>
            <person name="Bulach D.M."/>
            <person name="Zuerner R.L."/>
            <person name="Wilson P."/>
            <person name="Seemann T."/>
            <person name="McGrath A."/>
            <person name="Cullen P.A."/>
            <person name="Davis J."/>
            <person name="Johnson M."/>
            <person name="Kuczek E."/>
            <person name="Alt D.P."/>
            <person name="Peterson-Burch B."/>
            <person name="Coppel R.L."/>
            <person name="Rood J.I."/>
            <person name="Davies J.K."/>
            <person name="Adler B."/>
        </authorList>
    </citation>
    <scope>NUCLEOTIDE SEQUENCE [LARGE SCALE GENOMIC DNA]</scope>
    <source>
        <strain>L550</strain>
    </source>
</reference>
<name>MURE_LEPBL</name>
<organism>
    <name type="scientific">Leptospira borgpetersenii serovar Hardjo-bovis (strain L550)</name>
    <dbReference type="NCBI Taxonomy" id="355276"/>
    <lineage>
        <taxon>Bacteria</taxon>
        <taxon>Pseudomonadati</taxon>
        <taxon>Spirochaetota</taxon>
        <taxon>Spirochaetia</taxon>
        <taxon>Leptospirales</taxon>
        <taxon>Leptospiraceae</taxon>
        <taxon>Leptospira</taxon>
    </lineage>
</organism>